<evidence type="ECO:0000255" key="1">
    <source>
        <dbReference type="HAMAP-Rule" id="MF_00186"/>
    </source>
</evidence>
<dbReference type="EC" id="2.7.1.30" evidence="1"/>
<dbReference type="EMBL" id="CP001103">
    <property type="protein sequence ID" value="AEA96386.1"/>
    <property type="molecule type" value="Genomic_DNA"/>
</dbReference>
<dbReference type="RefSeq" id="WP_012516760.1">
    <property type="nucleotide sequence ID" value="NC_011138.3"/>
</dbReference>
<dbReference type="SMR" id="B4S2H6"/>
<dbReference type="KEGG" id="amc:MADE_1001185"/>
<dbReference type="PATRIC" id="fig|314275.5.peg.245"/>
<dbReference type="HOGENOM" id="CLU_009281_2_3_6"/>
<dbReference type="UniPathway" id="UPA00618">
    <property type="reaction ID" value="UER00672"/>
</dbReference>
<dbReference type="Proteomes" id="UP000001870">
    <property type="component" value="Chromosome"/>
</dbReference>
<dbReference type="GO" id="GO:0005829">
    <property type="term" value="C:cytosol"/>
    <property type="evidence" value="ECO:0007669"/>
    <property type="project" value="TreeGrafter"/>
</dbReference>
<dbReference type="GO" id="GO:0005524">
    <property type="term" value="F:ATP binding"/>
    <property type="evidence" value="ECO:0007669"/>
    <property type="project" value="UniProtKB-UniRule"/>
</dbReference>
<dbReference type="GO" id="GO:0004370">
    <property type="term" value="F:glycerol kinase activity"/>
    <property type="evidence" value="ECO:0000250"/>
    <property type="project" value="UniProtKB"/>
</dbReference>
<dbReference type="GO" id="GO:0019563">
    <property type="term" value="P:glycerol catabolic process"/>
    <property type="evidence" value="ECO:0007669"/>
    <property type="project" value="UniProtKB-UniRule"/>
</dbReference>
<dbReference type="GO" id="GO:0006071">
    <property type="term" value="P:glycerol metabolic process"/>
    <property type="evidence" value="ECO:0000250"/>
    <property type="project" value="UniProtKB"/>
</dbReference>
<dbReference type="GO" id="GO:0006072">
    <property type="term" value="P:glycerol-3-phosphate metabolic process"/>
    <property type="evidence" value="ECO:0007669"/>
    <property type="project" value="InterPro"/>
</dbReference>
<dbReference type="CDD" id="cd07786">
    <property type="entry name" value="FGGY_EcGK_like"/>
    <property type="match status" value="1"/>
</dbReference>
<dbReference type="FunFam" id="3.30.420.40:FF:000007">
    <property type="entry name" value="Glycerol kinase"/>
    <property type="match status" value="1"/>
</dbReference>
<dbReference type="FunFam" id="3.30.420.40:FF:000008">
    <property type="entry name" value="Glycerol kinase"/>
    <property type="match status" value="1"/>
</dbReference>
<dbReference type="Gene3D" id="3.30.420.40">
    <property type="match status" value="2"/>
</dbReference>
<dbReference type="HAMAP" id="MF_00186">
    <property type="entry name" value="Glycerol_kin"/>
    <property type="match status" value="1"/>
</dbReference>
<dbReference type="InterPro" id="IPR043129">
    <property type="entry name" value="ATPase_NBD"/>
</dbReference>
<dbReference type="InterPro" id="IPR000577">
    <property type="entry name" value="Carb_kinase_FGGY"/>
</dbReference>
<dbReference type="InterPro" id="IPR018483">
    <property type="entry name" value="Carb_kinase_FGGY_CS"/>
</dbReference>
<dbReference type="InterPro" id="IPR018485">
    <property type="entry name" value="FGGY_C"/>
</dbReference>
<dbReference type="InterPro" id="IPR018484">
    <property type="entry name" value="FGGY_N"/>
</dbReference>
<dbReference type="InterPro" id="IPR005999">
    <property type="entry name" value="Glycerol_kin"/>
</dbReference>
<dbReference type="NCBIfam" id="TIGR01311">
    <property type="entry name" value="glycerol_kin"/>
    <property type="match status" value="1"/>
</dbReference>
<dbReference type="NCBIfam" id="NF000756">
    <property type="entry name" value="PRK00047.1"/>
    <property type="match status" value="1"/>
</dbReference>
<dbReference type="PANTHER" id="PTHR10196:SF78">
    <property type="entry name" value="GLYCEROL KINASE"/>
    <property type="match status" value="1"/>
</dbReference>
<dbReference type="PANTHER" id="PTHR10196">
    <property type="entry name" value="SUGAR KINASE"/>
    <property type="match status" value="1"/>
</dbReference>
<dbReference type="Pfam" id="PF02782">
    <property type="entry name" value="FGGY_C"/>
    <property type="match status" value="1"/>
</dbReference>
<dbReference type="Pfam" id="PF00370">
    <property type="entry name" value="FGGY_N"/>
    <property type="match status" value="1"/>
</dbReference>
<dbReference type="PIRSF" id="PIRSF000538">
    <property type="entry name" value="GlpK"/>
    <property type="match status" value="1"/>
</dbReference>
<dbReference type="SUPFAM" id="SSF53067">
    <property type="entry name" value="Actin-like ATPase domain"/>
    <property type="match status" value="2"/>
</dbReference>
<dbReference type="PROSITE" id="PS00933">
    <property type="entry name" value="FGGY_KINASES_1"/>
    <property type="match status" value="1"/>
</dbReference>
<name>GLPK_ALTMD</name>
<protein>
    <recommendedName>
        <fullName evidence="1">Glycerol kinase</fullName>
        <ecNumber evidence="1">2.7.1.30</ecNumber>
    </recommendedName>
    <alternativeName>
        <fullName evidence="1">ATP:glycerol 3-phosphotransferase</fullName>
    </alternativeName>
    <alternativeName>
        <fullName evidence="1">Glycerokinase</fullName>
        <shortName evidence="1">GK</shortName>
    </alternativeName>
</protein>
<comment type="function">
    <text evidence="1">Key enzyme in the regulation of glycerol uptake and metabolism. Catalyzes the phosphorylation of glycerol to yield sn-glycerol 3-phosphate.</text>
</comment>
<comment type="catalytic activity">
    <reaction evidence="1">
        <text>glycerol + ATP = sn-glycerol 3-phosphate + ADP + H(+)</text>
        <dbReference type="Rhea" id="RHEA:21644"/>
        <dbReference type="ChEBI" id="CHEBI:15378"/>
        <dbReference type="ChEBI" id="CHEBI:17754"/>
        <dbReference type="ChEBI" id="CHEBI:30616"/>
        <dbReference type="ChEBI" id="CHEBI:57597"/>
        <dbReference type="ChEBI" id="CHEBI:456216"/>
        <dbReference type="EC" id="2.7.1.30"/>
    </reaction>
</comment>
<comment type="activity regulation">
    <text evidence="1">Inhibited by fructose 1,6-bisphosphate (FBP).</text>
</comment>
<comment type="pathway">
    <text evidence="1">Polyol metabolism; glycerol degradation via glycerol kinase pathway; sn-glycerol 3-phosphate from glycerol: step 1/1.</text>
</comment>
<comment type="similarity">
    <text evidence="1">Belongs to the FGGY kinase family.</text>
</comment>
<accession>B4S2H6</accession>
<accession>F2G3Q7</accession>
<reference key="1">
    <citation type="journal article" date="2008" name="ISME J.">
        <title>Comparative genomics of two ecotypes of the marine planktonic copiotroph Alteromonas macleodii suggests alternative lifestyles associated with different kinds of particulate organic matter.</title>
        <authorList>
            <person name="Ivars-Martinez E."/>
            <person name="Martin-Cuadrado A.-B."/>
            <person name="D'Auria G."/>
            <person name="Mira A."/>
            <person name="Ferriera S."/>
            <person name="Johnson J."/>
            <person name="Friedman R."/>
            <person name="Rodriguez-Valera F."/>
        </authorList>
    </citation>
    <scope>NUCLEOTIDE SEQUENCE [LARGE SCALE GENOMIC DNA]</scope>
    <source>
        <strain>DSM 17117 / CIP 110805 / LMG 28347 / Deep ecotype</strain>
    </source>
</reference>
<gene>
    <name evidence="1" type="primary">glpK</name>
    <name type="ordered locus">MADE_1001185</name>
</gene>
<proteinExistence type="inferred from homology"/>
<sequence>MGQHILAIDQGTTSSRSIIFSPKRSIDAIAQQEFSQKYPKDGWVEHDPEEIWESVVSTLKEVFNKCSVAPSDIAAIGITNQRETTLVWDKHSGKPVYNAIVWQDRRTAQYCRDFSEDEAFVSYITEATGLLLDPYFSATKIAWILDNVEGAREKAENGDLLFGTVDSYLIWRLTGGESHKTDATNASRTMLFDIHNQCWDEKLLSKFNIPASMLPEVMDCAADFGVIKEEIIGRAIPIQGVAGDQQAALVGQACFEKGMAKSTYGTGCFMILNTGDAPLQSKNRLLTTVGYRLNGKTTYALEGSIFMAGATVQWLRDGLKLIDDAAESEALAQRAREDNGVFLVPAFTGLGAPYWDPDARGAILGLTRDTGISEIVAAGLQSVCYQTKDLQKAMESDGARPTTIRVDGGMSRNDWVMGFLSDILGAEVERPEITETTALGAAFLAGLQAGVFNSIDDLTHCWKSDSVFTPRLTKQERDQAYDGWKSAVARIRCS</sequence>
<keyword id="KW-0067">ATP-binding</keyword>
<keyword id="KW-0319">Glycerol metabolism</keyword>
<keyword id="KW-0418">Kinase</keyword>
<keyword id="KW-0547">Nucleotide-binding</keyword>
<keyword id="KW-0808">Transferase</keyword>
<organism>
    <name type="scientific">Alteromonas mediterranea (strain DSM 17117 / CIP 110805 / LMG 28347 / Deep ecotype)</name>
    <dbReference type="NCBI Taxonomy" id="1774373"/>
    <lineage>
        <taxon>Bacteria</taxon>
        <taxon>Pseudomonadati</taxon>
        <taxon>Pseudomonadota</taxon>
        <taxon>Gammaproteobacteria</taxon>
        <taxon>Alteromonadales</taxon>
        <taxon>Alteromonadaceae</taxon>
        <taxon>Alteromonas/Salinimonas group</taxon>
        <taxon>Alteromonas</taxon>
    </lineage>
</organism>
<feature type="chain" id="PRO_1000098712" description="Glycerol kinase">
    <location>
        <begin position="1"/>
        <end position="494"/>
    </location>
</feature>
<feature type="binding site" evidence="1">
    <location>
        <position position="12"/>
    </location>
    <ligand>
        <name>ADP</name>
        <dbReference type="ChEBI" id="CHEBI:456216"/>
    </ligand>
</feature>
<feature type="binding site" evidence="1">
    <location>
        <position position="12"/>
    </location>
    <ligand>
        <name>ATP</name>
        <dbReference type="ChEBI" id="CHEBI:30616"/>
    </ligand>
</feature>
<feature type="binding site" evidence="1">
    <location>
        <position position="12"/>
    </location>
    <ligand>
        <name>sn-glycerol 3-phosphate</name>
        <dbReference type="ChEBI" id="CHEBI:57597"/>
    </ligand>
</feature>
<feature type="binding site" evidence="1">
    <location>
        <position position="13"/>
    </location>
    <ligand>
        <name>ATP</name>
        <dbReference type="ChEBI" id="CHEBI:30616"/>
    </ligand>
</feature>
<feature type="binding site" evidence="1">
    <location>
        <position position="14"/>
    </location>
    <ligand>
        <name>ATP</name>
        <dbReference type="ChEBI" id="CHEBI:30616"/>
    </ligand>
</feature>
<feature type="binding site" evidence="1">
    <location>
        <position position="16"/>
    </location>
    <ligand>
        <name>ADP</name>
        <dbReference type="ChEBI" id="CHEBI:456216"/>
    </ligand>
</feature>
<feature type="binding site" evidence="1">
    <location>
        <position position="82"/>
    </location>
    <ligand>
        <name>glycerol</name>
        <dbReference type="ChEBI" id="CHEBI:17754"/>
    </ligand>
</feature>
<feature type="binding site" evidence="1">
    <location>
        <position position="82"/>
    </location>
    <ligand>
        <name>sn-glycerol 3-phosphate</name>
        <dbReference type="ChEBI" id="CHEBI:57597"/>
    </ligand>
</feature>
<feature type="binding site" evidence="1">
    <location>
        <position position="83"/>
    </location>
    <ligand>
        <name>glycerol</name>
        <dbReference type="ChEBI" id="CHEBI:17754"/>
    </ligand>
</feature>
<feature type="binding site" evidence="1">
    <location>
        <position position="83"/>
    </location>
    <ligand>
        <name>sn-glycerol 3-phosphate</name>
        <dbReference type="ChEBI" id="CHEBI:57597"/>
    </ligand>
</feature>
<feature type="binding site" evidence="1">
    <location>
        <position position="135"/>
    </location>
    <ligand>
        <name>glycerol</name>
        <dbReference type="ChEBI" id="CHEBI:17754"/>
    </ligand>
</feature>
<feature type="binding site" evidence="1">
    <location>
        <position position="135"/>
    </location>
    <ligand>
        <name>sn-glycerol 3-phosphate</name>
        <dbReference type="ChEBI" id="CHEBI:57597"/>
    </ligand>
</feature>
<feature type="binding site" evidence="1">
    <location>
        <position position="244"/>
    </location>
    <ligand>
        <name>glycerol</name>
        <dbReference type="ChEBI" id="CHEBI:17754"/>
    </ligand>
</feature>
<feature type="binding site" evidence="1">
    <location>
        <position position="244"/>
    </location>
    <ligand>
        <name>sn-glycerol 3-phosphate</name>
        <dbReference type="ChEBI" id="CHEBI:57597"/>
    </ligand>
</feature>
<feature type="binding site" evidence="1">
    <location>
        <position position="245"/>
    </location>
    <ligand>
        <name>glycerol</name>
        <dbReference type="ChEBI" id="CHEBI:17754"/>
    </ligand>
</feature>
<feature type="binding site" evidence="1">
    <location>
        <position position="266"/>
    </location>
    <ligand>
        <name>ADP</name>
        <dbReference type="ChEBI" id="CHEBI:456216"/>
    </ligand>
</feature>
<feature type="binding site" evidence="1">
    <location>
        <position position="266"/>
    </location>
    <ligand>
        <name>ATP</name>
        <dbReference type="ChEBI" id="CHEBI:30616"/>
    </ligand>
</feature>
<feature type="binding site" evidence="1">
    <location>
        <position position="309"/>
    </location>
    <ligand>
        <name>ADP</name>
        <dbReference type="ChEBI" id="CHEBI:456216"/>
    </ligand>
</feature>
<feature type="binding site" evidence="1">
    <location>
        <position position="309"/>
    </location>
    <ligand>
        <name>ATP</name>
        <dbReference type="ChEBI" id="CHEBI:30616"/>
    </ligand>
</feature>
<feature type="binding site" evidence="1">
    <location>
        <position position="313"/>
    </location>
    <ligand>
        <name>ATP</name>
        <dbReference type="ChEBI" id="CHEBI:30616"/>
    </ligand>
</feature>
<feature type="binding site" evidence="1">
    <location>
        <position position="409"/>
    </location>
    <ligand>
        <name>ADP</name>
        <dbReference type="ChEBI" id="CHEBI:456216"/>
    </ligand>
</feature>
<feature type="binding site" evidence="1">
    <location>
        <position position="409"/>
    </location>
    <ligand>
        <name>ATP</name>
        <dbReference type="ChEBI" id="CHEBI:30616"/>
    </ligand>
</feature>
<feature type="binding site" evidence="1">
    <location>
        <position position="413"/>
    </location>
    <ligand>
        <name>ADP</name>
        <dbReference type="ChEBI" id="CHEBI:456216"/>
    </ligand>
</feature>